<accession>Q4ZYY9</accession>
<protein>
    <recommendedName>
        <fullName evidence="1">Small ribosomal subunit biogenesis GTPase RsgA</fullName>
        <ecNumber evidence="1">3.6.1.-</ecNumber>
    </recommendedName>
</protein>
<name>RSGA_PSEU2</name>
<feature type="chain" id="PRO_1000188129" description="Small ribosomal subunit biogenesis GTPase RsgA">
    <location>
        <begin position="1"/>
        <end position="343"/>
    </location>
</feature>
<feature type="domain" description="CP-type G" evidence="2">
    <location>
        <begin position="116"/>
        <end position="275"/>
    </location>
</feature>
<feature type="binding site" evidence="1">
    <location>
        <begin position="163"/>
        <end position="166"/>
    </location>
    <ligand>
        <name>GTP</name>
        <dbReference type="ChEBI" id="CHEBI:37565"/>
    </ligand>
</feature>
<feature type="binding site" evidence="1">
    <location>
        <begin position="217"/>
        <end position="225"/>
    </location>
    <ligand>
        <name>GTP</name>
        <dbReference type="ChEBI" id="CHEBI:37565"/>
    </ligand>
</feature>
<feature type="binding site" evidence="1">
    <location>
        <position position="299"/>
    </location>
    <ligand>
        <name>Zn(2+)</name>
        <dbReference type="ChEBI" id="CHEBI:29105"/>
    </ligand>
</feature>
<feature type="binding site" evidence="1">
    <location>
        <position position="304"/>
    </location>
    <ligand>
        <name>Zn(2+)</name>
        <dbReference type="ChEBI" id="CHEBI:29105"/>
    </ligand>
</feature>
<feature type="binding site" evidence="1">
    <location>
        <position position="306"/>
    </location>
    <ligand>
        <name>Zn(2+)</name>
        <dbReference type="ChEBI" id="CHEBI:29105"/>
    </ligand>
</feature>
<feature type="binding site" evidence="1">
    <location>
        <position position="312"/>
    </location>
    <ligand>
        <name>Zn(2+)</name>
        <dbReference type="ChEBI" id="CHEBI:29105"/>
    </ligand>
</feature>
<organism>
    <name type="scientific">Pseudomonas syringae pv. syringae (strain B728a)</name>
    <dbReference type="NCBI Taxonomy" id="205918"/>
    <lineage>
        <taxon>Bacteria</taxon>
        <taxon>Pseudomonadati</taxon>
        <taxon>Pseudomonadota</taxon>
        <taxon>Gammaproteobacteria</taxon>
        <taxon>Pseudomonadales</taxon>
        <taxon>Pseudomonadaceae</taxon>
        <taxon>Pseudomonas</taxon>
        <taxon>Pseudomonas syringae</taxon>
    </lineage>
</organism>
<dbReference type="EC" id="3.6.1.-" evidence="1"/>
<dbReference type="EMBL" id="CP000075">
    <property type="protein sequence ID" value="AAY35633.1"/>
    <property type="molecule type" value="Genomic_DNA"/>
</dbReference>
<dbReference type="RefSeq" id="WP_003366295.1">
    <property type="nucleotide sequence ID" value="NC_007005.1"/>
</dbReference>
<dbReference type="RefSeq" id="YP_233671.1">
    <property type="nucleotide sequence ID" value="NC_007005.1"/>
</dbReference>
<dbReference type="SMR" id="Q4ZYY9"/>
<dbReference type="STRING" id="205918.Psyr_0563"/>
<dbReference type="KEGG" id="psb:Psyr_0563"/>
<dbReference type="PATRIC" id="fig|205918.7.peg.586"/>
<dbReference type="eggNOG" id="COG1162">
    <property type="taxonomic scope" value="Bacteria"/>
</dbReference>
<dbReference type="HOGENOM" id="CLU_033617_2_0_6"/>
<dbReference type="OrthoDB" id="9809485at2"/>
<dbReference type="Proteomes" id="UP000000426">
    <property type="component" value="Chromosome"/>
</dbReference>
<dbReference type="GO" id="GO:0005737">
    <property type="term" value="C:cytoplasm"/>
    <property type="evidence" value="ECO:0007669"/>
    <property type="project" value="UniProtKB-SubCell"/>
</dbReference>
<dbReference type="GO" id="GO:0005525">
    <property type="term" value="F:GTP binding"/>
    <property type="evidence" value="ECO:0007669"/>
    <property type="project" value="UniProtKB-UniRule"/>
</dbReference>
<dbReference type="GO" id="GO:0003924">
    <property type="term" value="F:GTPase activity"/>
    <property type="evidence" value="ECO:0007669"/>
    <property type="project" value="UniProtKB-UniRule"/>
</dbReference>
<dbReference type="GO" id="GO:0046872">
    <property type="term" value="F:metal ion binding"/>
    <property type="evidence" value="ECO:0007669"/>
    <property type="project" value="UniProtKB-KW"/>
</dbReference>
<dbReference type="GO" id="GO:0019843">
    <property type="term" value="F:rRNA binding"/>
    <property type="evidence" value="ECO:0007669"/>
    <property type="project" value="UniProtKB-KW"/>
</dbReference>
<dbReference type="GO" id="GO:0042274">
    <property type="term" value="P:ribosomal small subunit biogenesis"/>
    <property type="evidence" value="ECO:0007669"/>
    <property type="project" value="UniProtKB-UniRule"/>
</dbReference>
<dbReference type="CDD" id="cd01854">
    <property type="entry name" value="YjeQ_EngC"/>
    <property type="match status" value="1"/>
</dbReference>
<dbReference type="Gene3D" id="2.40.50.140">
    <property type="entry name" value="Nucleic acid-binding proteins"/>
    <property type="match status" value="1"/>
</dbReference>
<dbReference type="Gene3D" id="3.40.50.300">
    <property type="entry name" value="P-loop containing nucleotide triphosphate hydrolases"/>
    <property type="match status" value="1"/>
</dbReference>
<dbReference type="Gene3D" id="1.10.40.50">
    <property type="entry name" value="Probable gtpase engc, domain 3"/>
    <property type="match status" value="1"/>
</dbReference>
<dbReference type="HAMAP" id="MF_01820">
    <property type="entry name" value="GTPase_RsgA"/>
    <property type="match status" value="1"/>
</dbReference>
<dbReference type="InterPro" id="IPR030378">
    <property type="entry name" value="G_CP_dom"/>
</dbReference>
<dbReference type="InterPro" id="IPR012340">
    <property type="entry name" value="NA-bd_OB-fold"/>
</dbReference>
<dbReference type="InterPro" id="IPR027417">
    <property type="entry name" value="P-loop_NTPase"/>
</dbReference>
<dbReference type="InterPro" id="IPR004881">
    <property type="entry name" value="Ribosome_biogen_GTPase_RsgA"/>
</dbReference>
<dbReference type="InterPro" id="IPR010914">
    <property type="entry name" value="RsgA_GTPase_dom"/>
</dbReference>
<dbReference type="NCBIfam" id="NF008931">
    <property type="entry name" value="PRK12288.1"/>
    <property type="match status" value="1"/>
</dbReference>
<dbReference type="NCBIfam" id="TIGR00157">
    <property type="entry name" value="ribosome small subunit-dependent GTPase A"/>
    <property type="match status" value="1"/>
</dbReference>
<dbReference type="PANTHER" id="PTHR32120">
    <property type="entry name" value="SMALL RIBOSOMAL SUBUNIT BIOGENESIS GTPASE RSGA"/>
    <property type="match status" value="1"/>
</dbReference>
<dbReference type="PANTHER" id="PTHR32120:SF11">
    <property type="entry name" value="SMALL RIBOSOMAL SUBUNIT BIOGENESIS GTPASE RSGA 1, MITOCHONDRIAL-RELATED"/>
    <property type="match status" value="1"/>
</dbReference>
<dbReference type="Pfam" id="PF03193">
    <property type="entry name" value="RsgA_GTPase"/>
    <property type="match status" value="1"/>
</dbReference>
<dbReference type="SUPFAM" id="SSF52540">
    <property type="entry name" value="P-loop containing nucleoside triphosphate hydrolases"/>
    <property type="match status" value="1"/>
</dbReference>
<dbReference type="PROSITE" id="PS50936">
    <property type="entry name" value="ENGC_GTPASE"/>
    <property type="match status" value="1"/>
</dbReference>
<dbReference type="PROSITE" id="PS51721">
    <property type="entry name" value="G_CP"/>
    <property type="match status" value="1"/>
</dbReference>
<gene>
    <name evidence="1" type="primary">rsgA</name>
    <name type="ordered locus">Psyr_0563</name>
</gene>
<comment type="function">
    <text evidence="1">One of several proteins that assist in the late maturation steps of the functional core of the 30S ribosomal subunit. Helps release RbfA from mature subunits. May play a role in the assembly of ribosomal proteins into the subunit. Circularly permuted GTPase that catalyzes slow GTP hydrolysis, GTPase activity is stimulated by the 30S ribosomal subunit.</text>
</comment>
<comment type="cofactor">
    <cofactor evidence="1">
        <name>Zn(2+)</name>
        <dbReference type="ChEBI" id="CHEBI:29105"/>
    </cofactor>
    <text evidence="1">Binds 1 zinc ion per subunit.</text>
</comment>
<comment type="subunit">
    <text evidence="1">Monomer. Associates with 30S ribosomal subunit, binds 16S rRNA.</text>
</comment>
<comment type="subcellular location">
    <subcellularLocation>
        <location evidence="1">Cytoplasm</location>
    </subcellularLocation>
</comment>
<comment type="similarity">
    <text evidence="1">Belongs to the TRAFAC class YlqF/YawG GTPase family. RsgA subfamily.</text>
</comment>
<keyword id="KW-0963">Cytoplasm</keyword>
<keyword id="KW-0342">GTP-binding</keyword>
<keyword id="KW-0378">Hydrolase</keyword>
<keyword id="KW-0479">Metal-binding</keyword>
<keyword id="KW-0547">Nucleotide-binding</keyword>
<keyword id="KW-0690">Ribosome biogenesis</keyword>
<keyword id="KW-0694">RNA-binding</keyword>
<keyword id="KW-0699">rRNA-binding</keyword>
<keyword id="KW-0862">Zinc</keyword>
<sequence length="343" mass="37430">MAKRQLNRRQNWRIEKIQGERAARAAKRESATLETLEGGDLGPEQTGLVIAHFGVQVEVEAQEGEVTGQVFRCHLRANLPALVTGDRVVWRAGNQGIGVIVAQLPRTTELRRPDSRGQLKPVAANVDLIVIVFAPMPEPHANLIDRYLVAAEHAGIRPLLLLNKADLIDEQNAPALNALLAVYRTLGYPVLEVSAHHGDGMQSLQSQLDGHISVFVGQSGVGKSSLVNSLLPETDTRVGPLSEVSGQGTHTTTTARLFHFPRGGDLIDSPGIREFGLGHVSRADVEAGFIEFNDLIGTCRFRDCKHDREPGCALLKGLEDGRVQQQRMNSYRSIIASLPQDSY</sequence>
<evidence type="ECO:0000255" key="1">
    <source>
        <dbReference type="HAMAP-Rule" id="MF_01820"/>
    </source>
</evidence>
<evidence type="ECO:0000255" key="2">
    <source>
        <dbReference type="PROSITE-ProRule" id="PRU01058"/>
    </source>
</evidence>
<reference key="1">
    <citation type="journal article" date="2005" name="Proc. Natl. Acad. Sci. U.S.A.">
        <title>Comparison of the complete genome sequences of Pseudomonas syringae pv. syringae B728a and pv. tomato DC3000.</title>
        <authorList>
            <person name="Feil H."/>
            <person name="Feil W.S."/>
            <person name="Chain P."/>
            <person name="Larimer F."/>
            <person name="Dibartolo G."/>
            <person name="Copeland A."/>
            <person name="Lykidis A."/>
            <person name="Trong S."/>
            <person name="Nolan M."/>
            <person name="Goltsman E."/>
            <person name="Thiel J."/>
            <person name="Malfatti S."/>
            <person name="Loper J.E."/>
            <person name="Lapidus A."/>
            <person name="Detter J.C."/>
            <person name="Land M."/>
            <person name="Richardson P.M."/>
            <person name="Kyrpides N.C."/>
            <person name="Ivanova N."/>
            <person name="Lindow S.E."/>
        </authorList>
    </citation>
    <scope>NUCLEOTIDE SEQUENCE [LARGE SCALE GENOMIC DNA]</scope>
    <source>
        <strain>B728a</strain>
    </source>
</reference>
<proteinExistence type="inferred from homology"/>